<dbReference type="EMBL" id="AB049946">
    <property type="protein sequence ID" value="BAB40999.1"/>
    <property type="molecule type" value="mRNA"/>
</dbReference>
<dbReference type="EMBL" id="AF265439">
    <property type="protein sequence ID" value="AAG44697.1"/>
    <property type="status" value="ALT_INIT"/>
    <property type="molecule type" value="mRNA"/>
</dbReference>
<dbReference type="EMBL" id="AK315441">
    <property type="protein sequence ID" value="BAG37829.1"/>
    <property type="molecule type" value="mRNA"/>
</dbReference>
<dbReference type="EMBL" id="CH471059">
    <property type="protein sequence ID" value="EAX07359.1"/>
    <property type="molecule type" value="Genomic_DNA"/>
</dbReference>
<dbReference type="EMBL" id="BC031336">
    <property type="protein sequence ID" value="AAH31336.1"/>
    <property type="molecule type" value="mRNA"/>
</dbReference>
<dbReference type="CCDS" id="CCDS411.1"/>
<dbReference type="RefSeq" id="NP_112570.2">
    <property type="nucleotide sequence ID" value="NM_031280.3"/>
</dbReference>
<dbReference type="PDB" id="3J9M">
    <property type="method" value="EM"/>
    <property type="resolution" value="3.50 A"/>
    <property type="chains" value="AL=1-257"/>
</dbReference>
<dbReference type="PDB" id="6NU2">
    <property type="method" value="EM"/>
    <property type="resolution" value="3.90 A"/>
    <property type="chains" value="AL=66-229"/>
</dbReference>
<dbReference type="PDB" id="6NU3">
    <property type="method" value="EM"/>
    <property type="resolution" value="4.40 A"/>
    <property type="chains" value="AL=1-257"/>
</dbReference>
<dbReference type="PDB" id="6RW4">
    <property type="method" value="EM"/>
    <property type="resolution" value="2.97 A"/>
    <property type="chains" value="L=1-257"/>
</dbReference>
<dbReference type="PDB" id="6RW5">
    <property type="method" value="EM"/>
    <property type="resolution" value="3.14 A"/>
    <property type="chains" value="L=1-257"/>
</dbReference>
<dbReference type="PDB" id="6VLZ">
    <property type="method" value="EM"/>
    <property type="resolution" value="2.97 A"/>
    <property type="chains" value="AL=1-257"/>
</dbReference>
<dbReference type="PDB" id="6VMI">
    <property type="method" value="EM"/>
    <property type="resolution" value="2.96 A"/>
    <property type="chains" value="AL=1-257"/>
</dbReference>
<dbReference type="PDB" id="6ZM5">
    <property type="method" value="EM"/>
    <property type="resolution" value="2.89 A"/>
    <property type="chains" value="AL=1-257"/>
</dbReference>
<dbReference type="PDB" id="6ZM6">
    <property type="method" value="EM"/>
    <property type="resolution" value="2.59 A"/>
    <property type="chains" value="AL=1-257"/>
</dbReference>
<dbReference type="PDB" id="6ZS9">
    <property type="method" value="EM"/>
    <property type="resolution" value="4.00 A"/>
    <property type="chains" value="AL=1-257"/>
</dbReference>
<dbReference type="PDB" id="6ZSA">
    <property type="method" value="EM"/>
    <property type="resolution" value="4.00 A"/>
    <property type="chains" value="AL=1-257"/>
</dbReference>
<dbReference type="PDB" id="6ZSB">
    <property type="method" value="EM"/>
    <property type="resolution" value="4.50 A"/>
    <property type="chains" value="AL=1-257"/>
</dbReference>
<dbReference type="PDB" id="6ZSC">
    <property type="method" value="EM"/>
    <property type="resolution" value="3.50 A"/>
    <property type="chains" value="AL=1-257"/>
</dbReference>
<dbReference type="PDB" id="6ZSD">
    <property type="method" value="EM"/>
    <property type="resolution" value="3.70 A"/>
    <property type="chains" value="AL=1-257"/>
</dbReference>
<dbReference type="PDB" id="6ZSE">
    <property type="method" value="EM"/>
    <property type="resolution" value="5.00 A"/>
    <property type="chains" value="AL=1-257"/>
</dbReference>
<dbReference type="PDB" id="6ZSG">
    <property type="method" value="EM"/>
    <property type="resolution" value="4.00 A"/>
    <property type="chains" value="AL=1-257"/>
</dbReference>
<dbReference type="PDB" id="7A5F">
    <property type="method" value="EM"/>
    <property type="resolution" value="4.40 A"/>
    <property type="chains" value="L6=1-257"/>
</dbReference>
<dbReference type="PDB" id="7A5G">
    <property type="method" value="EM"/>
    <property type="resolution" value="4.33 A"/>
    <property type="chains" value="L6=1-257"/>
</dbReference>
<dbReference type="PDB" id="7A5I">
    <property type="method" value="EM"/>
    <property type="resolution" value="3.70 A"/>
    <property type="chains" value="L6=1-257"/>
</dbReference>
<dbReference type="PDB" id="7A5K">
    <property type="method" value="EM"/>
    <property type="resolution" value="3.70 A"/>
    <property type="chains" value="L6=1-257"/>
</dbReference>
<dbReference type="PDB" id="7L08">
    <property type="method" value="EM"/>
    <property type="resolution" value="3.49 A"/>
    <property type="chains" value="AL=1-257"/>
</dbReference>
<dbReference type="PDB" id="7OG4">
    <property type="method" value="EM"/>
    <property type="resolution" value="3.80 A"/>
    <property type="chains" value="AL=1-257"/>
</dbReference>
<dbReference type="PDB" id="7P2E">
    <property type="method" value="EM"/>
    <property type="resolution" value="2.40 A"/>
    <property type="chains" value="L=1-257"/>
</dbReference>
<dbReference type="PDB" id="7PNX">
    <property type="method" value="EM"/>
    <property type="resolution" value="2.76 A"/>
    <property type="chains" value="L=1-257"/>
</dbReference>
<dbReference type="PDB" id="7PNY">
    <property type="method" value="EM"/>
    <property type="resolution" value="3.06 A"/>
    <property type="chains" value="L=1-257"/>
</dbReference>
<dbReference type="PDB" id="7PNZ">
    <property type="method" value="EM"/>
    <property type="resolution" value="3.09 A"/>
    <property type="chains" value="L=1-257"/>
</dbReference>
<dbReference type="PDB" id="7PO0">
    <property type="method" value="EM"/>
    <property type="resolution" value="2.90 A"/>
    <property type="chains" value="L=1-257"/>
</dbReference>
<dbReference type="PDB" id="7PO1">
    <property type="method" value="EM"/>
    <property type="resolution" value="2.92 A"/>
    <property type="chains" value="L=1-257"/>
</dbReference>
<dbReference type="PDB" id="7PO2">
    <property type="method" value="EM"/>
    <property type="resolution" value="3.09 A"/>
    <property type="chains" value="L=1-257"/>
</dbReference>
<dbReference type="PDB" id="7PO3">
    <property type="method" value="EM"/>
    <property type="resolution" value="2.92 A"/>
    <property type="chains" value="L=1-257"/>
</dbReference>
<dbReference type="PDB" id="7QI4">
    <property type="method" value="EM"/>
    <property type="resolution" value="2.21 A"/>
    <property type="chains" value="AL=1-257"/>
</dbReference>
<dbReference type="PDB" id="7QI5">
    <property type="method" value="EM"/>
    <property type="resolution" value="2.63 A"/>
    <property type="chains" value="AL=1-257"/>
</dbReference>
<dbReference type="PDB" id="7QI6">
    <property type="method" value="EM"/>
    <property type="resolution" value="2.98 A"/>
    <property type="chains" value="AL=1-257"/>
</dbReference>
<dbReference type="PDB" id="8ANY">
    <property type="method" value="EM"/>
    <property type="resolution" value="2.85 A"/>
    <property type="chains" value="AL=1-257"/>
</dbReference>
<dbReference type="PDB" id="8CSP">
    <property type="method" value="EM"/>
    <property type="resolution" value="2.66 A"/>
    <property type="chains" value="L=1-257"/>
</dbReference>
<dbReference type="PDB" id="8CSQ">
    <property type="method" value="EM"/>
    <property type="resolution" value="2.54 A"/>
    <property type="chains" value="L=1-257"/>
</dbReference>
<dbReference type="PDB" id="8CSR">
    <property type="method" value="EM"/>
    <property type="resolution" value="2.54 A"/>
    <property type="chains" value="L=1-257"/>
</dbReference>
<dbReference type="PDB" id="8CSS">
    <property type="method" value="EM"/>
    <property type="resolution" value="2.36 A"/>
    <property type="chains" value="L=1-257"/>
</dbReference>
<dbReference type="PDB" id="8CST">
    <property type="method" value="EM"/>
    <property type="resolution" value="2.85 A"/>
    <property type="chains" value="L=1-257"/>
</dbReference>
<dbReference type="PDB" id="8CSU">
    <property type="method" value="EM"/>
    <property type="resolution" value="3.03 A"/>
    <property type="chains" value="L=1-257"/>
</dbReference>
<dbReference type="PDB" id="8K2A">
    <property type="method" value="EM"/>
    <property type="resolution" value="2.90 A"/>
    <property type="chains" value="SO=1-257"/>
</dbReference>
<dbReference type="PDB" id="8OIR">
    <property type="method" value="EM"/>
    <property type="resolution" value="3.10 A"/>
    <property type="chains" value="AL=1-257"/>
</dbReference>
<dbReference type="PDB" id="8OIS">
    <property type="method" value="EM"/>
    <property type="resolution" value="3.00 A"/>
    <property type="chains" value="AL=1-257"/>
</dbReference>
<dbReference type="PDB" id="8QRK">
    <property type="method" value="EM"/>
    <property type="resolution" value="6.69 A"/>
    <property type="chains" value="L=1-257"/>
</dbReference>
<dbReference type="PDB" id="8QRL">
    <property type="method" value="EM"/>
    <property type="resolution" value="3.34 A"/>
    <property type="chains" value="L=1-257"/>
</dbReference>
<dbReference type="PDB" id="8QRM">
    <property type="method" value="EM"/>
    <property type="resolution" value="3.05 A"/>
    <property type="chains" value="L=1-257"/>
</dbReference>
<dbReference type="PDB" id="8QRN">
    <property type="method" value="EM"/>
    <property type="resolution" value="2.98 A"/>
    <property type="chains" value="L=1-257"/>
</dbReference>
<dbReference type="PDB" id="8RRI">
    <property type="method" value="EM"/>
    <property type="resolution" value="2.40 A"/>
    <property type="chains" value="AL=1-257"/>
</dbReference>
<dbReference type="PDB" id="8XT0">
    <property type="method" value="EM"/>
    <property type="resolution" value="3.20 A"/>
    <property type="chains" value="SO=1-257"/>
</dbReference>
<dbReference type="PDB" id="8XT2">
    <property type="method" value="EM"/>
    <property type="resolution" value="3.30 A"/>
    <property type="chains" value="SO=1-257"/>
</dbReference>
<dbReference type="PDBsum" id="3J9M"/>
<dbReference type="PDBsum" id="6NU2"/>
<dbReference type="PDBsum" id="6NU3"/>
<dbReference type="PDBsum" id="6RW4"/>
<dbReference type="PDBsum" id="6RW5"/>
<dbReference type="PDBsum" id="6VLZ"/>
<dbReference type="PDBsum" id="6VMI"/>
<dbReference type="PDBsum" id="6ZM5"/>
<dbReference type="PDBsum" id="6ZM6"/>
<dbReference type="PDBsum" id="6ZS9"/>
<dbReference type="PDBsum" id="6ZSA"/>
<dbReference type="PDBsum" id="6ZSB"/>
<dbReference type="PDBsum" id="6ZSC"/>
<dbReference type="PDBsum" id="6ZSD"/>
<dbReference type="PDBsum" id="6ZSE"/>
<dbReference type="PDBsum" id="6ZSG"/>
<dbReference type="PDBsum" id="7A5F"/>
<dbReference type="PDBsum" id="7A5G"/>
<dbReference type="PDBsum" id="7A5I"/>
<dbReference type="PDBsum" id="7A5K"/>
<dbReference type="PDBsum" id="7L08"/>
<dbReference type="PDBsum" id="7OG4"/>
<dbReference type="PDBsum" id="7P2E"/>
<dbReference type="PDBsum" id="7PNX"/>
<dbReference type="PDBsum" id="7PNY"/>
<dbReference type="PDBsum" id="7PNZ"/>
<dbReference type="PDBsum" id="7PO0"/>
<dbReference type="PDBsum" id="7PO1"/>
<dbReference type="PDBsum" id="7PO2"/>
<dbReference type="PDBsum" id="7PO3"/>
<dbReference type="PDBsum" id="7QI4"/>
<dbReference type="PDBsum" id="7QI5"/>
<dbReference type="PDBsum" id="7QI6"/>
<dbReference type="PDBsum" id="8ANY"/>
<dbReference type="PDBsum" id="8CSP"/>
<dbReference type="PDBsum" id="8CSQ"/>
<dbReference type="PDBsum" id="8CSR"/>
<dbReference type="PDBsum" id="8CSS"/>
<dbReference type="PDBsum" id="8CST"/>
<dbReference type="PDBsum" id="8CSU"/>
<dbReference type="PDBsum" id="8K2A"/>
<dbReference type="PDBsum" id="8OIR"/>
<dbReference type="PDBsum" id="8OIS"/>
<dbReference type="PDBsum" id="8QRK"/>
<dbReference type="PDBsum" id="8QRL"/>
<dbReference type="PDBsum" id="8QRM"/>
<dbReference type="PDBsum" id="8QRN"/>
<dbReference type="PDBsum" id="8RRI"/>
<dbReference type="PDBsum" id="8XT0"/>
<dbReference type="PDBsum" id="8XT2"/>
<dbReference type="EMDB" id="EMD-0514"/>
<dbReference type="EMDB" id="EMD-0515"/>
<dbReference type="EMDB" id="EMD-10021"/>
<dbReference type="EMDB" id="EMD-10022"/>
<dbReference type="EMDB" id="EMD-11278"/>
<dbReference type="EMDB" id="EMD-11279"/>
<dbReference type="EMDB" id="EMD-11390"/>
<dbReference type="EMDB" id="EMD-11391"/>
<dbReference type="EMDB" id="EMD-11392"/>
<dbReference type="EMDB" id="EMD-11393"/>
<dbReference type="EMDB" id="EMD-11394"/>
<dbReference type="EMDB" id="EMD-11395"/>
<dbReference type="EMDB" id="EMD-11397"/>
<dbReference type="EMDB" id="EMD-11641"/>
<dbReference type="EMDB" id="EMD-11642"/>
<dbReference type="EMDB" id="EMD-11644"/>
<dbReference type="EMDB" id="EMD-11646"/>
<dbReference type="EMDB" id="EMD-12877"/>
<dbReference type="EMDB" id="EMD-13170"/>
<dbReference type="EMDB" id="EMD-13555"/>
<dbReference type="EMDB" id="EMD-13556"/>
<dbReference type="EMDB" id="EMD-13557"/>
<dbReference type="EMDB" id="EMD-13558"/>
<dbReference type="EMDB" id="EMD-13559"/>
<dbReference type="EMDB" id="EMD-13560"/>
<dbReference type="EMDB" id="EMD-13561"/>
<dbReference type="EMDB" id="EMD-13980"/>
<dbReference type="EMDB" id="EMD-13981"/>
<dbReference type="EMDB" id="EMD-13982"/>
<dbReference type="EMDB" id="EMD-15544"/>
<dbReference type="EMDB" id="EMD-16897"/>
<dbReference type="EMDB" id="EMD-16898"/>
<dbReference type="EMDB" id="EMD-19460"/>
<dbReference type="EMDB" id="EMD-21233"/>
<dbReference type="EMDB" id="EMD-21242"/>
<dbReference type="EMDB" id="EMD-23096"/>
<dbReference type="EMDB" id="EMD-26966"/>
<dbReference type="EMDB" id="EMD-26967"/>
<dbReference type="EMDB" id="EMD-26968"/>
<dbReference type="EMDB" id="EMD-26969"/>
<dbReference type="EMDB" id="EMD-26970"/>
<dbReference type="EMDB" id="EMD-26971"/>
<dbReference type="EMDB" id="EMD-36836"/>
<dbReference type="EMDB" id="EMD-38632"/>
<dbReference type="EMDB" id="EMD-38634"/>
<dbReference type="SMR" id="P82914"/>
<dbReference type="BioGRID" id="122358">
    <property type="interactions" value="169"/>
</dbReference>
<dbReference type="ComplexPortal" id="CPX-5225">
    <property type="entry name" value="28S mitochondrial small ribosomal subunit"/>
</dbReference>
<dbReference type="CORUM" id="P82914"/>
<dbReference type="FunCoup" id="P82914">
    <property type="interactions" value="1898"/>
</dbReference>
<dbReference type="IntAct" id="P82914">
    <property type="interactions" value="123"/>
</dbReference>
<dbReference type="MINT" id="P82914"/>
<dbReference type="STRING" id="9606.ENSP00000362208"/>
<dbReference type="GlyGen" id="P82914">
    <property type="glycosylation" value="1 site, 1 O-linked glycan (1 site)"/>
</dbReference>
<dbReference type="iPTMnet" id="P82914"/>
<dbReference type="PhosphoSitePlus" id="P82914"/>
<dbReference type="BioMuta" id="MRPS15"/>
<dbReference type="DMDM" id="13633907"/>
<dbReference type="jPOST" id="P82914"/>
<dbReference type="MassIVE" id="P82914"/>
<dbReference type="PaxDb" id="9606-ENSP00000362208"/>
<dbReference type="PeptideAtlas" id="P82914"/>
<dbReference type="ProteomicsDB" id="57720"/>
<dbReference type="Pumba" id="P82914"/>
<dbReference type="TopDownProteomics" id="P82914"/>
<dbReference type="Antibodypedia" id="31697">
    <property type="antibodies" value="187 antibodies from 26 providers"/>
</dbReference>
<dbReference type="DNASU" id="64960"/>
<dbReference type="Ensembl" id="ENST00000373116.6">
    <property type="protein sequence ID" value="ENSP00000362208.5"/>
    <property type="gene ID" value="ENSG00000116898.12"/>
</dbReference>
<dbReference type="GeneID" id="64960"/>
<dbReference type="KEGG" id="hsa:64960"/>
<dbReference type="MANE-Select" id="ENST00000373116.6">
    <property type="protein sequence ID" value="ENSP00000362208.5"/>
    <property type="RefSeq nucleotide sequence ID" value="NM_031280.4"/>
    <property type="RefSeq protein sequence ID" value="NP_112570.2"/>
</dbReference>
<dbReference type="UCSC" id="uc001cas.3">
    <property type="organism name" value="human"/>
</dbReference>
<dbReference type="AGR" id="HGNC:14504"/>
<dbReference type="CTD" id="64960"/>
<dbReference type="DisGeNET" id="64960"/>
<dbReference type="GeneCards" id="MRPS15"/>
<dbReference type="HGNC" id="HGNC:14504">
    <property type="gene designation" value="MRPS15"/>
</dbReference>
<dbReference type="HPA" id="ENSG00000116898">
    <property type="expression patterns" value="Tissue enhanced (skeletal)"/>
</dbReference>
<dbReference type="MIM" id="611979">
    <property type="type" value="gene"/>
</dbReference>
<dbReference type="neXtProt" id="NX_P82914"/>
<dbReference type="OpenTargets" id="ENSG00000116898"/>
<dbReference type="PharmGKB" id="PA30999"/>
<dbReference type="VEuPathDB" id="HostDB:ENSG00000116898"/>
<dbReference type="eggNOG" id="KOG2815">
    <property type="taxonomic scope" value="Eukaryota"/>
</dbReference>
<dbReference type="GeneTree" id="ENSGT00390000001737"/>
<dbReference type="HOGENOM" id="CLU_094627_0_0_1"/>
<dbReference type="InParanoid" id="P82914"/>
<dbReference type="OMA" id="EHLHMHP"/>
<dbReference type="OrthoDB" id="441444at2759"/>
<dbReference type="PAN-GO" id="P82914">
    <property type="GO annotations" value="1 GO annotation based on evolutionary models"/>
</dbReference>
<dbReference type="PhylomeDB" id="P82914"/>
<dbReference type="TreeFam" id="TF319038"/>
<dbReference type="PathwayCommons" id="P82914"/>
<dbReference type="Reactome" id="R-HSA-5368286">
    <property type="pathway name" value="Mitochondrial translation initiation"/>
</dbReference>
<dbReference type="Reactome" id="R-HSA-5389840">
    <property type="pathway name" value="Mitochondrial translation elongation"/>
</dbReference>
<dbReference type="Reactome" id="R-HSA-5419276">
    <property type="pathway name" value="Mitochondrial translation termination"/>
</dbReference>
<dbReference type="SignaLink" id="P82914"/>
<dbReference type="SIGNOR" id="P82914"/>
<dbReference type="BioGRID-ORCS" id="64960">
    <property type="hits" value="101 hits in 1160 CRISPR screens"/>
</dbReference>
<dbReference type="CD-CODE" id="91857CE7">
    <property type="entry name" value="Nucleolus"/>
</dbReference>
<dbReference type="ChiTaRS" id="MRPS15">
    <property type="organism name" value="human"/>
</dbReference>
<dbReference type="GenomeRNAi" id="64960"/>
<dbReference type="Pharos" id="P82914">
    <property type="development level" value="Tdark"/>
</dbReference>
<dbReference type="PRO" id="PR:P82914"/>
<dbReference type="Proteomes" id="UP000005640">
    <property type="component" value="Chromosome 1"/>
</dbReference>
<dbReference type="RNAct" id="P82914">
    <property type="molecule type" value="protein"/>
</dbReference>
<dbReference type="Bgee" id="ENSG00000116898">
    <property type="expression patterns" value="Expressed in biceps brachii and 203 other cell types or tissues"/>
</dbReference>
<dbReference type="GO" id="GO:0005743">
    <property type="term" value="C:mitochondrial inner membrane"/>
    <property type="evidence" value="ECO:0000304"/>
    <property type="project" value="Reactome"/>
</dbReference>
<dbReference type="GO" id="GO:0005759">
    <property type="term" value="C:mitochondrial matrix"/>
    <property type="evidence" value="ECO:0000314"/>
    <property type="project" value="UniProtKB"/>
</dbReference>
<dbReference type="GO" id="GO:0005763">
    <property type="term" value="C:mitochondrial small ribosomal subunit"/>
    <property type="evidence" value="ECO:0000314"/>
    <property type="project" value="UniProtKB"/>
</dbReference>
<dbReference type="GO" id="GO:0005739">
    <property type="term" value="C:mitochondrion"/>
    <property type="evidence" value="ECO:0000314"/>
    <property type="project" value="HPA"/>
</dbReference>
<dbReference type="GO" id="GO:0005730">
    <property type="term" value="C:nucleolus"/>
    <property type="evidence" value="ECO:0000314"/>
    <property type="project" value="HPA"/>
</dbReference>
<dbReference type="GO" id="GO:0005654">
    <property type="term" value="C:nucleoplasm"/>
    <property type="evidence" value="ECO:0000314"/>
    <property type="project" value="HPA"/>
</dbReference>
<dbReference type="GO" id="GO:0003723">
    <property type="term" value="F:RNA binding"/>
    <property type="evidence" value="ECO:0007005"/>
    <property type="project" value="UniProtKB"/>
</dbReference>
<dbReference type="GO" id="GO:0003735">
    <property type="term" value="F:structural constituent of ribosome"/>
    <property type="evidence" value="ECO:0000250"/>
    <property type="project" value="UniProtKB"/>
</dbReference>
<dbReference type="GO" id="GO:0032543">
    <property type="term" value="P:mitochondrial translation"/>
    <property type="evidence" value="ECO:0000250"/>
    <property type="project" value="UniProtKB"/>
</dbReference>
<dbReference type="GO" id="GO:0006412">
    <property type="term" value="P:translation"/>
    <property type="evidence" value="ECO:0000303"/>
    <property type="project" value="UniProtKB"/>
</dbReference>
<dbReference type="CDD" id="cd00353">
    <property type="entry name" value="Ribosomal_S15p_S13e"/>
    <property type="match status" value="1"/>
</dbReference>
<dbReference type="FunFam" id="1.10.287.10:FF:000015">
    <property type="entry name" value="Mitochondrial ribosomal protein S15"/>
    <property type="match status" value="1"/>
</dbReference>
<dbReference type="Gene3D" id="1.10.287.10">
    <property type="entry name" value="S15/NS1, RNA-binding"/>
    <property type="match status" value="1"/>
</dbReference>
<dbReference type="HAMAP" id="MF_01343_B">
    <property type="entry name" value="Ribosomal_uS15_B"/>
    <property type="match status" value="1"/>
</dbReference>
<dbReference type="InterPro" id="IPR000589">
    <property type="entry name" value="Ribosomal_uS15"/>
</dbReference>
<dbReference type="InterPro" id="IPR005290">
    <property type="entry name" value="Ribosomal_uS15_bac-type"/>
</dbReference>
<dbReference type="InterPro" id="IPR009068">
    <property type="entry name" value="uS15_NS1_RNA-bd_sf"/>
</dbReference>
<dbReference type="InterPro" id="IPR052137">
    <property type="entry name" value="uS15_ribosomal"/>
</dbReference>
<dbReference type="PANTHER" id="PTHR46685">
    <property type="entry name" value="28S RIBOSOMAL PROTEIN S15, MITOCHONDRIAL"/>
    <property type="match status" value="1"/>
</dbReference>
<dbReference type="PANTHER" id="PTHR46685:SF1">
    <property type="entry name" value="SMALL RIBOSOMAL SUBUNIT PROTEIN US15M"/>
    <property type="match status" value="1"/>
</dbReference>
<dbReference type="Pfam" id="PF00312">
    <property type="entry name" value="Ribosomal_S15"/>
    <property type="match status" value="1"/>
</dbReference>
<dbReference type="SMART" id="SM01387">
    <property type="entry name" value="Ribosomal_S15"/>
    <property type="match status" value="1"/>
</dbReference>
<dbReference type="SUPFAM" id="SSF47060">
    <property type="entry name" value="S15/NS1 RNA-binding domain"/>
    <property type="match status" value="1"/>
</dbReference>
<comment type="subunit">
    <text evidence="1 4">Component of the mitochondrial small ribosomal subunit (mt-SSU). Mature mammalian 55S mitochondrial ribosomes consist of a small (28S) and a large (39S) subunit. The 28S small subunit contains a 12S ribosomal RNA (12S mt-rRNA) and 30 different proteins. The 39S large subunit contains a 16S rRNA (16S mt-rRNA), a copy of mitochondrial valine transfer RNA (mt-tRNA(Val)), which plays an integral structural role, and 52 different proteins (PubMed:25838379). Interacts with METTL17 (By similarity).</text>
</comment>
<comment type="interaction">
    <interactant intactId="EBI-2880040">
        <id>P82914</id>
    </interactant>
    <interactant intactId="EBI-721110">
        <id>Q96EY7</id>
        <label>PTCD3</label>
    </interactant>
    <organismsDiffer>false</organismsDiffer>
    <experiments>3</experiments>
</comment>
<comment type="subcellular location">
    <subcellularLocation>
        <location evidence="4 5">Mitochondrion matrix</location>
    </subcellularLocation>
</comment>
<comment type="similarity">
    <text evidence="7">Belongs to the universal ribosomal protein uS15 family.</text>
</comment>
<comment type="sequence caution" evidence="7">
    <conflict type="erroneous initiation">
        <sequence resource="EMBL-CDS" id="AAG44697"/>
    </conflict>
</comment>
<keyword id="KW-0002">3D-structure</keyword>
<keyword id="KW-0496">Mitochondrion</keyword>
<keyword id="KW-1267">Proteomics identification</keyword>
<keyword id="KW-1185">Reference proteome</keyword>
<keyword id="KW-0687">Ribonucleoprotein</keyword>
<keyword id="KW-0689">Ribosomal protein</keyword>
<keyword id="KW-0809">Transit peptide</keyword>
<evidence type="ECO:0000250" key="1">
    <source>
        <dbReference type="UniProtKB" id="Q9DC71"/>
    </source>
</evidence>
<evidence type="ECO:0000255" key="2"/>
<evidence type="ECO:0000256" key="3">
    <source>
        <dbReference type="SAM" id="MobiDB-lite"/>
    </source>
</evidence>
<evidence type="ECO:0000269" key="4">
    <source>
    </source>
</evidence>
<evidence type="ECO:0000269" key="5">
    <source>
    </source>
</evidence>
<evidence type="ECO:0000303" key="6">
    <source>
    </source>
</evidence>
<evidence type="ECO:0000305" key="7"/>
<evidence type="ECO:0007744" key="8">
    <source>
        <dbReference type="PDB" id="3J9M"/>
    </source>
</evidence>
<evidence type="ECO:0007829" key="9">
    <source>
        <dbReference type="PDB" id="8CSS"/>
    </source>
</evidence>
<sequence>MLRVAWRTLSLIRTRAVTQVLVPGLPGGGSAKFPFNQWGLQPRSLLLQAARGYVVRKPAQSRLDDDPPPSTLLKDYQNVPGIEKVDDVVKRLLSLEMANKKEMLKIKQEQFMKKIVANPEDTRSLEARIIALSVKIRSYEEHLEKHRKDKAHKRYLLMSIDQRKKMLKNLRNTNYDVFEKICWGLGIEYTFPPLYYRRAHRRFVTKKALCIRVFQETQKLKKRRRALKAAAAAQKQAKRRNPDSPAKAIPKTLKDSQ</sequence>
<feature type="transit peptide" description="Mitochondrion" evidence="2">
    <location>
        <begin position="1"/>
        <end position="57"/>
    </location>
</feature>
<feature type="chain" id="PRO_0000030614" description="Small ribosomal subunit protein uS15m">
    <location>
        <begin position="58"/>
        <end position="257"/>
    </location>
</feature>
<feature type="region of interest" description="Disordered" evidence="3">
    <location>
        <begin position="225"/>
        <end position="257"/>
    </location>
</feature>
<feature type="sequence conflict" description="In Ref. 2; AAG44697." evidence="7" ref="2">
    <original>GGGSAKFPFNQWGLQPRSLLLQAARGYVVRKPAQSRLDDDPPPSTLLKDYQNV</original>
    <variation>AVGAPSFLSTSGACSLEVSSSRPRADMSSGNQPSLGWMMTHLLLRCSKTTRMS</variation>
    <location>
        <begin position="27"/>
        <end position="79"/>
    </location>
</feature>
<feature type="helix" evidence="9">
    <location>
        <begin position="74"/>
        <end position="76"/>
    </location>
</feature>
<feature type="strand" evidence="9">
    <location>
        <begin position="77"/>
        <end position="79"/>
    </location>
</feature>
<feature type="helix" evidence="9">
    <location>
        <begin position="82"/>
        <end position="84"/>
    </location>
</feature>
<feature type="helix" evidence="9">
    <location>
        <begin position="87"/>
        <end position="92"/>
    </location>
</feature>
<feature type="helix" evidence="9">
    <location>
        <begin position="95"/>
        <end position="97"/>
    </location>
</feature>
<feature type="helix" evidence="9">
    <location>
        <begin position="100"/>
        <end position="115"/>
    </location>
</feature>
<feature type="helix" evidence="9">
    <location>
        <begin position="125"/>
        <end position="145"/>
    </location>
</feature>
<feature type="helix" evidence="9">
    <location>
        <begin position="150"/>
        <end position="173"/>
    </location>
</feature>
<feature type="helix" evidence="9">
    <location>
        <begin position="175"/>
        <end position="185"/>
    </location>
</feature>
<feature type="helix" evidence="9">
    <location>
        <begin position="201"/>
        <end position="224"/>
    </location>
</feature>
<gene>
    <name type="primary">MRPS15</name>
    <name type="synonym">RPMS15</name>
    <name type="ORF">DC37</name>
</gene>
<proteinExistence type="evidence at protein level"/>
<organism>
    <name type="scientific">Homo sapiens</name>
    <name type="common">Human</name>
    <dbReference type="NCBI Taxonomy" id="9606"/>
    <lineage>
        <taxon>Eukaryota</taxon>
        <taxon>Metazoa</taxon>
        <taxon>Chordata</taxon>
        <taxon>Craniata</taxon>
        <taxon>Vertebrata</taxon>
        <taxon>Euteleostomi</taxon>
        <taxon>Mammalia</taxon>
        <taxon>Eutheria</taxon>
        <taxon>Euarchontoglires</taxon>
        <taxon>Primates</taxon>
        <taxon>Haplorrhini</taxon>
        <taxon>Catarrhini</taxon>
        <taxon>Hominidae</taxon>
        <taxon>Homo</taxon>
    </lineage>
</organism>
<name>RT15_HUMAN</name>
<accession>P82914</accession>
<accession>B2RD82</accession>
<accession>Q9H2K1</accession>
<protein>
    <recommendedName>
        <fullName evidence="6">Small ribosomal subunit protein uS15m</fullName>
    </recommendedName>
    <alternativeName>
        <fullName>28S ribosomal protein S15, mitochondrial</fullName>
        <shortName>MRP-S15</shortName>
        <shortName>S15mt</shortName>
    </alternativeName>
</protein>
<reference key="1">
    <citation type="journal article" date="2001" name="J. Biol. Chem.">
        <title>Proteomic analysis of the mammalian mitochondrial ribosome. Identification of protein components in the 28S small subunit.</title>
        <authorList>
            <person name="Suzuki T."/>
            <person name="Terasaki M."/>
            <person name="Takemoto-Hori C."/>
            <person name="Hanada T."/>
            <person name="Ueda T."/>
            <person name="Wada A."/>
            <person name="Watanabe K."/>
        </authorList>
    </citation>
    <scope>NUCLEOTIDE SEQUENCE [MRNA]</scope>
</reference>
<reference key="2">
    <citation type="submission" date="2000-05" db="EMBL/GenBank/DDBJ databases">
        <title>Novel genes expressed in human dendritic cell.</title>
        <authorList>
            <person name="Xu X."/>
            <person name="Yang Y."/>
            <person name="Gao G."/>
            <person name="Xiao H."/>
            <person name="Chen Z."/>
            <person name="Han Z."/>
        </authorList>
    </citation>
    <scope>NUCLEOTIDE SEQUENCE [LARGE SCALE MRNA]</scope>
    <source>
        <tissue>Dendritic cell</tissue>
    </source>
</reference>
<reference key="3">
    <citation type="journal article" date="2004" name="Nat. Genet.">
        <title>Complete sequencing and characterization of 21,243 full-length human cDNAs.</title>
        <authorList>
            <person name="Ota T."/>
            <person name="Suzuki Y."/>
            <person name="Nishikawa T."/>
            <person name="Otsuki T."/>
            <person name="Sugiyama T."/>
            <person name="Irie R."/>
            <person name="Wakamatsu A."/>
            <person name="Hayashi K."/>
            <person name="Sato H."/>
            <person name="Nagai K."/>
            <person name="Kimura K."/>
            <person name="Makita H."/>
            <person name="Sekine M."/>
            <person name="Obayashi M."/>
            <person name="Nishi T."/>
            <person name="Shibahara T."/>
            <person name="Tanaka T."/>
            <person name="Ishii S."/>
            <person name="Yamamoto J."/>
            <person name="Saito K."/>
            <person name="Kawai Y."/>
            <person name="Isono Y."/>
            <person name="Nakamura Y."/>
            <person name="Nagahari K."/>
            <person name="Murakami K."/>
            <person name="Yasuda T."/>
            <person name="Iwayanagi T."/>
            <person name="Wagatsuma M."/>
            <person name="Shiratori A."/>
            <person name="Sudo H."/>
            <person name="Hosoiri T."/>
            <person name="Kaku Y."/>
            <person name="Kodaira H."/>
            <person name="Kondo H."/>
            <person name="Sugawara M."/>
            <person name="Takahashi M."/>
            <person name="Kanda K."/>
            <person name="Yokoi T."/>
            <person name="Furuya T."/>
            <person name="Kikkawa E."/>
            <person name="Omura Y."/>
            <person name="Abe K."/>
            <person name="Kamihara K."/>
            <person name="Katsuta N."/>
            <person name="Sato K."/>
            <person name="Tanikawa M."/>
            <person name="Yamazaki M."/>
            <person name="Ninomiya K."/>
            <person name="Ishibashi T."/>
            <person name="Yamashita H."/>
            <person name="Murakawa K."/>
            <person name="Fujimori K."/>
            <person name="Tanai H."/>
            <person name="Kimata M."/>
            <person name="Watanabe M."/>
            <person name="Hiraoka S."/>
            <person name="Chiba Y."/>
            <person name="Ishida S."/>
            <person name="Ono Y."/>
            <person name="Takiguchi S."/>
            <person name="Watanabe S."/>
            <person name="Yosida M."/>
            <person name="Hotuta T."/>
            <person name="Kusano J."/>
            <person name="Kanehori K."/>
            <person name="Takahashi-Fujii A."/>
            <person name="Hara H."/>
            <person name="Tanase T.-O."/>
            <person name="Nomura Y."/>
            <person name="Togiya S."/>
            <person name="Komai F."/>
            <person name="Hara R."/>
            <person name="Takeuchi K."/>
            <person name="Arita M."/>
            <person name="Imose N."/>
            <person name="Musashino K."/>
            <person name="Yuuki H."/>
            <person name="Oshima A."/>
            <person name="Sasaki N."/>
            <person name="Aotsuka S."/>
            <person name="Yoshikawa Y."/>
            <person name="Matsunawa H."/>
            <person name="Ichihara T."/>
            <person name="Shiohata N."/>
            <person name="Sano S."/>
            <person name="Moriya S."/>
            <person name="Momiyama H."/>
            <person name="Satoh N."/>
            <person name="Takami S."/>
            <person name="Terashima Y."/>
            <person name="Suzuki O."/>
            <person name="Nakagawa S."/>
            <person name="Senoh A."/>
            <person name="Mizoguchi H."/>
            <person name="Goto Y."/>
            <person name="Shimizu F."/>
            <person name="Wakebe H."/>
            <person name="Hishigaki H."/>
            <person name="Watanabe T."/>
            <person name="Sugiyama A."/>
            <person name="Takemoto M."/>
            <person name="Kawakami B."/>
            <person name="Yamazaki M."/>
            <person name="Watanabe K."/>
            <person name="Kumagai A."/>
            <person name="Itakura S."/>
            <person name="Fukuzumi Y."/>
            <person name="Fujimori Y."/>
            <person name="Komiyama M."/>
            <person name="Tashiro H."/>
            <person name="Tanigami A."/>
            <person name="Fujiwara T."/>
            <person name="Ono T."/>
            <person name="Yamada K."/>
            <person name="Fujii Y."/>
            <person name="Ozaki K."/>
            <person name="Hirao M."/>
            <person name="Ohmori Y."/>
            <person name="Kawabata A."/>
            <person name="Hikiji T."/>
            <person name="Kobatake N."/>
            <person name="Inagaki H."/>
            <person name="Ikema Y."/>
            <person name="Okamoto S."/>
            <person name="Okitani R."/>
            <person name="Kawakami T."/>
            <person name="Noguchi S."/>
            <person name="Itoh T."/>
            <person name="Shigeta K."/>
            <person name="Senba T."/>
            <person name="Matsumura K."/>
            <person name="Nakajima Y."/>
            <person name="Mizuno T."/>
            <person name="Morinaga M."/>
            <person name="Sasaki M."/>
            <person name="Togashi T."/>
            <person name="Oyama M."/>
            <person name="Hata H."/>
            <person name="Watanabe M."/>
            <person name="Komatsu T."/>
            <person name="Mizushima-Sugano J."/>
            <person name="Satoh T."/>
            <person name="Shirai Y."/>
            <person name="Takahashi Y."/>
            <person name="Nakagawa K."/>
            <person name="Okumura K."/>
            <person name="Nagase T."/>
            <person name="Nomura N."/>
            <person name="Kikuchi H."/>
            <person name="Masuho Y."/>
            <person name="Yamashita R."/>
            <person name="Nakai K."/>
            <person name="Yada T."/>
            <person name="Nakamura Y."/>
            <person name="Ohara O."/>
            <person name="Isogai T."/>
            <person name="Sugano S."/>
        </authorList>
    </citation>
    <scope>NUCLEOTIDE SEQUENCE [LARGE SCALE MRNA]</scope>
    <source>
        <tissue>Heart</tissue>
    </source>
</reference>
<reference key="4">
    <citation type="submission" date="2005-09" db="EMBL/GenBank/DDBJ databases">
        <authorList>
            <person name="Mural R.J."/>
            <person name="Istrail S."/>
            <person name="Sutton G.G."/>
            <person name="Florea L."/>
            <person name="Halpern A.L."/>
            <person name="Mobarry C.M."/>
            <person name="Lippert R."/>
            <person name="Walenz B."/>
            <person name="Shatkay H."/>
            <person name="Dew I."/>
            <person name="Miller J.R."/>
            <person name="Flanigan M.J."/>
            <person name="Edwards N.J."/>
            <person name="Bolanos R."/>
            <person name="Fasulo D."/>
            <person name="Halldorsson B.V."/>
            <person name="Hannenhalli S."/>
            <person name="Turner R."/>
            <person name="Yooseph S."/>
            <person name="Lu F."/>
            <person name="Nusskern D.R."/>
            <person name="Shue B.C."/>
            <person name="Zheng X.H."/>
            <person name="Zhong F."/>
            <person name="Delcher A.L."/>
            <person name="Huson D.H."/>
            <person name="Kravitz S.A."/>
            <person name="Mouchard L."/>
            <person name="Reinert K."/>
            <person name="Remington K.A."/>
            <person name="Clark A.G."/>
            <person name="Waterman M.S."/>
            <person name="Eichler E.E."/>
            <person name="Adams M.D."/>
            <person name="Hunkapiller M.W."/>
            <person name="Myers E.W."/>
            <person name="Venter J.C."/>
        </authorList>
    </citation>
    <scope>NUCLEOTIDE SEQUENCE [LARGE SCALE GENOMIC DNA]</scope>
</reference>
<reference key="5">
    <citation type="journal article" date="2004" name="Genome Res.">
        <title>The status, quality, and expansion of the NIH full-length cDNA project: the Mammalian Gene Collection (MGC).</title>
        <authorList>
            <consortium name="The MGC Project Team"/>
        </authorList>
    </citation>
    <scope>NUCLEOTIDE SEQUENCE [LARGE SCALE MRNA]</scope>
    <source>
        <tissue>Skin</tissue>
    </source>
</reference>
<reference key="6">
    <citation type="journal article" date="2001" name="J. Biol. Chem.">
        <title>The small subunit of the mammalian mitochondrial ribosome: identification of the full complement of ribosomal proteins present.</title>
        <authorList>
            <person name="Koc E.C."/>
            <person name="Burkhart W."/>
            <person name="Blackburn K."/>
            <person name="Moseley A."/>
            <person name="Spremulli L.L."/>
        </authorList>
    </citation>
    <scope>IDENTIFICATION</scope>
</reference>
<reference key="7">
    <citation type="journal article" date="2011" name="BMC Syst. Biol.">
        <title>Initial characterization of the human central proteome.</title>
        <authorList>
            <person name="Burkard T.R."/>
            <person name="Planyavsky M."/>
            <person name="Kaupe I."/>
            <person name="Breitwieser F.P."/>
            <person name="Buerckstuemmer T."/>
            <person name="Bennett K.L."/>
            <person name="Superti-Furga G."/>
            <person name="Colinge J."/>
        </authorList>
    </citation>
    <scope>IDENTIFICATION BY MASS SPECTROMETRY [LARGE SCALE ANALYSIS]</scope>
</reference>
<reference key="8">
    <citation type="journal article" date="2015" name="Proteomics">
        <title>N-terminome analysis of the human mitochondrial proteome.</title>
        <authorList>
            <person name="Vaca Jacome A.S."/>
            <person name="Rabilloud T."/>
            <person name="Schaeffer-Reiss C."/>
            <person name="Rompais M."/>
            <person name="Ayoub D."/>
            <person name="Lane L."/>
            <person name="Bairoch A."/>
            <person name="Van Dorsselaer A."/>
            <person name="Carapito C."/>
        </authorList>
    </citation>
    <scope>IDENTIFICATION BY MASS SPECTROMETRY [LARGE SCALE ANALYSIS]</scope>
</reference>
<reference key="9">
    <citation type="journal article" date="2016" name="Cell Rep.">
        <title>APEX Fingerprinting Reveals the Subcellular Localization of Proteins of Interest.</title>
        <authorList>
            <person name="Lee S.Y."/>
            <person name="Kang M.G."/>
            <person name="Park J.S."/>
            <person name="Lee G."/>
            <person name="Ting A.Y."/>
            <person name="Rhee H.W."/>
        </authorList>
    </citation>
    <scope>SUBCELLULAR LOCATION</scope>
</reference>
<reference evidence="8" key="10">
    <citation type="journal article" date="2015" name="Science">
        <title>Ribosome. The structure of the human mitochondrial ribosome.</title>
        <authorList>
            <person name="Amunts A."/>
            <person name="Brown A."/>
            <person name="Toots J."/>
            <person name="Scheres S.H."/>
            <person name="Ramakrishnan V."/>
        </authorList>
    </citation>
    <scope>STRUCTURE BY ELECTRON MICROSCOPY (3.50 ANGSTROMS)</scope>
    <scope>SUBCELLULAR LOCATION</scope>
    <scope>SUBUNIT</scope>
</reference>